<name>CIF_PHOLL</name>
<comment type="function">
    <text evidence="2 3 4 5">Protein-glutamine deamidase effector that inhibits the host cell cycle and other key cellular processes such as the actin network and programmed-cell death (PubMed:19225106, PubMed:19308257, PubMed:20870031). Acts by mediating the side chain deamidation of 'Gln-40' of host NEDD8, converting it to glutamate, thereby abolishing the activity of cullin-RING-based E3 ubiquitin-protein ligase complexes (CRL complexes) (By similarity). Inactivation of CRL complexes prevents ubiquitination and subsequent degradation of the cyclin-dependent kinase inhibitors CDKN1A/p21 and CDKN1B/p27, leading to G1 and G2 cell cycle arrests in host cells (PubMed:19308257). Deamidation of 'Gln-40' of host NEDD8 also triggers macrophage-specific programmed cell death (By similarity). Also able to catalyze deamidation of 'Gln-40' of host ubiquitin in vitro; however, NEDD8 constitutes the preferred substrate in vivo (By similarity).</text>
</comment>
<comment type="catalytic activity">
    <reaction evidence="2">
        <text>L-glutaminyl-[protein] + H2O = L-glutamyl-[protein] + NH4(+)</text>
        <dbReference type="Rhea" id="RHEA:16441"/>
        <dbReference type="Rhea" id="RHEA-COMP:10207"/>
        <dbReference type="Rhea" id="RHEA-COMP:10208"/>
        <dbReference type="ChEBI" id="CHEBI:15377"/>
        <dbReference type="ChEBI" id="CHEBI:28938"/>
        <dbReference type="ChEBI" id="CHEBI:29973"/>
        <dbReference type="ChEBI" id="CHEBI:30011"/>
        <dbReference type="EC" id="3.5.1.44"/>
    </reaction>
    <physiologicalReaction direction="left-to-right" evidence="2">
        <dbReference type="Rhea" id="RHEA:16442"/>
    </physiologicalReaction>
</comment>
<comment type="subcellular location">
    <subcellularLocation>
        <location evidence="1">Secreted</location>
    </subcellularLocation>
    <subcellularLocation>
        <location evidence="1">Host nucleus</location>
    </subcellularLocation>
    <text evidence="1">Secreted via the type III secretion system (T3SS).</text>
</comment>
<comment type="similarity">
    <text evidence="8">Belongs to the Cif family.</text>
</comment>
<accession>Q7N439</accession>
<sequence length="313" mass="35319">MGDDIMPISNLAKESEVRAVKDIPCKNIETDNHLEIGLSSGLSRSKDTSKFKKNSINTIKLIDDIIALHNDPKGNKLLWNDNWQDKIINRDLANIFEKIDESVSELGGLEMYQEMVGVNPYDPTEPVCGLSAQNIFKLMTEGEHAVDPVEMAQTGKIDGNEFAESVDQLSSAKNYVALVNDRRLGHMFLIDIPSNDQETVGYIYQSDLGQGALPPLKIADWLNSRGKDAVSLNKLKKLLSREFNLLSDDEKRALISETLDIHKDVSNVELDRIKRDRGVDIYLTEYDVNNFYENIETLKSKLSNYDKKLSKPK</sequence>
<evidence type="ECO:0000250" key="1">
    <source>
        <dbReference type="UniProtKB" id="P0DUW5"/>
    </source>
</evidence>
<evidence type="ECO:0000250" key="2">
    <source>
        <dbReference type="UniProtKB" id="Q63KH5"/>
    </source>
</evidence>
<evidence type="ECO:0000269" key="3">
    <source>
    </source>
</evidence>
<evidence type="ECO:0000269" key="4">
    <source>
    </source>
</evidence>
<evidence type="ECO:0000269" key="5">
    <source>
    </source>
</evidence>
<evidence type="ECO:0000303" key="6">
    <source>
    </source>
</evidence>
<evidence type="ECO:0000303" key="7">
    <source>
    </source>
</evidence>
<evidence type="ECO:0000305" key="8"/>
<evidence type="ECO:0000305" key="9">
    <source>
    </source>
</evidence>
<evidence type="ECO:0000305" key="10">
    <source>
    </source>
</evidence>
<evidence type="ECO:0000305" key="11">
    <source>
    </source>
</evidence>
<evidence type="ECO:0000312" key="12">
    <source>
        <dbReference type="EMBL" id="CAE14889.1"/>
    </source>
</evidence>
<evidence type="ECO:0000312" key="13">
    <source>
        <dbReference type="Proteomes" id="UP000002514"/>
    </source>
</evidence>
<evidence type="ECO:0007744" key="14">
    <source>
        <dbReference type="PDB" id="3GQJ"/>
    </source>
</evidence>
<evidence type="ECO:0007744" key="15">
    <source>
        <dbReference type="PDB" id="4FBJ"/>
    </source>
</evidence>
<evidence type="ECO:0007829" key="16">
    <source>
        <dbReference type="PDB" id="4FBJ"/>
    </source>
</evidence>
<proteinExistence type="evidence at protein level"/>
<dbReference type="EC" id="3.5.1.44" evidence="2"/>
<dbReference type="EMBL" id="BX571867">
    <property type="protein sequence ID" value="CAE14889.1"/>
    <property type="molecule type" value="Genomic_DNA"/>
</dbReference>
<dbReference type="PDB" id="3GQJ">
    <property type="method" value="X-ray"/>
    <property type="resolution" value="1.85 A"/>
    <property type="chains" value="A=53-313"/>
</dbReference>
<dbReference type="PDB" id="4FBJ">
    <property type="method" value="X-ray"/>
    <property type="resolution" value="1.60 A"/>
    <property type="chains" value="A=53-313"/>
</dbReference>
<dbReference type="PDBsum" id="3GQJ"/>
<dbReference type="PDBsum" id="4FBJ"/>
<dbReference type="SMR" id="Q7N439"/>
<dbReference type="STRING" id="243265.plu2515"/>
<dbReference type="KEGG" id="plu:plu2515"/>
<dbReference type="eggNOG" id="ENOG5032RCC">
    <property type="taxonomic scope" value="Bacteria"/>
</dbReference>
<dbReference type="HOGENOM" id="CLU_077138_0_0_6"/>
<dbReference type="EvolutionaryTrace" id="Q7N439"/>
<dbReference type="Proteomes" id="UP000002514">
    <property type="component" value="Chromosome"/>
</dbReference>
<dbReference type="GO" id="GO:0005576">
    <property type="term" value="C:extracellular region"/>
    <property type="evidence" value="ECO:0007669"/>
    <property type="project" value="UniProtKB-SubCell"/>
</dbReference>
<dbReference type="GO" id="GO:0042025">
    <property type="term" value="C:host cell nucleus"/>
    <property type="evidence" value="ECO:0000250"/>
    <property type="project" value="UniProtKB"/>
</dbReference>
<dbReference type="GO" id="GO:0016787">
    <property type="term" value="F:hydrolase activity"/>
    <property type="evidence" value="ECO:0007669"/>
    <property type="project" value="UniProtKB-KW"/>
</dbReference>
<dbReference type="GO" id="GO:0090729">
    <property type="term" value="F:toxin activity"/>
    <property type="evidence" value="ECO:0000314"/>
    <property type="project" value="UniProtKB"/>
</dbReference>
<dbReference type="GO" id="GO:0044071">
    <property type="term" value="P:symbiont-mediated perturbation of host cell cycle progression"/>
    <property type="evidence" value="ECO:0000314"/>
    <property type="project" value="UniProtKB"/>
</dbReference>
<dbReference type="InterPro" id="IPR032278">
    <property type="entry name" value="Cif"/>
</dbReference>
<dbReference type="Pfam" id="PF16374">
    <property type="entry name" value="CIF"/>
    <property type="match status" value="1"/>
</dbReference>
<gene>
    <name evidence="7" type="primary">cif</name>
    <name evidence="12" type="ordered locus">plu2515</name>
</gene>
<feature type="chain" id="PRO_0000453903" description="Protein-glutamine deamidase Cif">
    <location>
        <begin position="1"/>
        <end position="313"/>
    </location>
</feature>
<feature type="active site" evidence="9 10 11">
    <location>
        <position position="128"/>
    </location>
</feature>
<feature type="active site" evidence="11">
    <location>
        <position position="186"/>
    </location>
</feature>
<feature type="active site" evidence="11">
    <location>
        <position position="205"/>
    </location>
</feature>
<feature type="mutagenesis site" description="Abolished ability to inhibit the host cell cycle. Abolished accumulation of the cyclin-dependent kinase inhibitors CDKN1A/p21 and CDKN1B/p27." evidence="3 4">
    <original>C</original>
    <variation>S</variation>
    <location>
        <position position="128"/>
    </location>
</feature>
<feature type="helix" evidence="16">
    <location>
        <begin position="58"/>
        <end position="70"/>
    </location>
</feature>
<feature type="helix" evidence="16">
    <location>
        <begin position="72"/>
        <end position="78"/>
    </location>
</feature>
<feature type="helix" evidence="16">
    <location>
        <begin position="87"/>
        <end position="89"/>
    </location>
</feature>
<feature type="helix" evidence="16">
    <location>
        <begin position="92"/>
        <end position="105"/>
    </location>
</feature>
<feature type="helix" evidence="16">
    <location>
        <begin position="109"/>
        <end position="116"/>
    </location>
</feature>
<feature type="helix" evidence="16">
    <location>
        <begin position="128"/>
        <end position="140"/>
    </location>
</feature>
<feature type="strand" evidence="16">
    <location>
        <begin position="142"/>
        <end position="144"/>
    </location>
</feature>
<feature type="helix" evidence="16">
    <location>
        <begin position="148"/>
        <end position="154"/>
    </location>
</feature>
<feature type="helix" evidence="16">
    <location>
        <begin position="159"/>
        <end position="165"/>
    </location>
</feature>
<feature type="helix" evidence="16">
    <location>
        <begin position="166"/>
        <end position="168"/>
    </location>
</feature>
<feature type="strand" evidence="16">
    <location>
        <begin position="174"/>
        <end position="181"/>
    </location>
</feature>
<feature type="turn" evidence="16">
    <location>
        <begin position="182"/>
        <end position="185"/>
    </location>
</feature>
<feature type="strand" evidence="16">
    <location>
        <begin position="186"/>
        <end position="192"/>
    </location>
</feature>
<feature type="strand" evidence="16">
    <location>
        <begin position="200"/>
        <end position="204"/>
    </location>
</feature>
<feature type="strand" evidence="16">
    <location>
        <begin position="211"/>
        <end position="213"/>
    </location>
</feature>
<feature type="helix" evidence="16">
    <location>
        <begin position="218"/>
        <end position="223"/>
    </location>
</feature>
<feature type="helix" evidence="16">
    <location>
        <begin position="225"/>
        <end position="227"/>
    </location>
</feature>
<feature type="strand" evidence="16">
    <location>
        <begin position="228"/>
        <end position="231"/>
    </location>
</feature>
<feature type="helix" evidence="16">
    <location>
        <begin position="232"/>
        <end position="239"/>
    </location>
</feature>
<feature type="helix" evidence="16">
    <location>
        <begin position="241"/>
        <end position="245"/>
    </location>
</feature>
<feature type="helix" evidence="16">
    <location>
        <begin position="248"/>
        <end position="259"/>
    </location>
</feature>
<feature type="helix" evidence="16">
    <location>
        <begin position="265"/>
        <end position="267"/>
    </location>
</feature>
<feature type="helix" evidence="16">
    <location>
        <begin position="270"/>
        <end position="272"/>
    </location>
</feature>
<feature type="strand" evidence="16">
    <location>
        <begin position="279"/>
        <end position="286"/>
    </location>
</feature>
<feature type="helix" evidence="16">
    <location>
        <begin position="288"/>
        <end position="303"/>
    </location>
</feature>
<protein>
    <recommendedName>
        <fullName>Protein-glutamine deamidase Cif</fullName>
        <ecNumber evidence="2">3.5.1.44</ecNumber>
    </recommendedName>
    <alternativeName>
        <fullName evidence="7">Cycle-inhibiting factor homolog</fullName>
        <shortName evidence="6">CHPL</shortName>
    </alternativeName>
</protein>
<reference key="1">
    <citation type="journal article" date="2003" name="Nat. Biotechnol.">
        <title>The genome sequence of the entomopathogenic bacterium Photorhabdus luminescens.</title>
        <authorList>
            <person name="Duchaud E."/>
            <person name="Rusniok C."/>
            <person name="Frangeul L."/>
            <person name="Buchrieser C."/>
            <person name="Givaudan A."/>
            <person name="Taourit S."/>
            <person name="Bocs S."/>
            <person name="Boursaux-Eude C."/>
            <person name="Chandler M."/>
            <person name="Charles J.-F."/>
            <person name="Dassa E."/>
            <person name="Derose R."/>
            <person name="Derzelle S."/>
            <person name="Freyssinet G."/>
            <person name="Gaudriault S."/>
            <person name="Medigue C."/>
            <person name="Lanois A."/>
            <person name="Powell K."/>
            <person name="Siguier P."/>
            <person name="Vincent R."/>
            <person name="Wingate V."/>
            <person name="Zouine M."/>
            <person name="Glaser P."/>
            <person name="Boemare N."/>
            <person name="Danchin A."/>
            <person name="Kunst F."/>
        </authorList>
    </citation>
    <scope>NUCLEOTIDE SEQUENCE [LARGE SCALE GENOMIC DNA]</scope>
    <source>
        <strain evidence="13">DSM 15139 / CIP 105565 / TT01</strain>
    </source>
</reference>
<reference key="2">
    <citation type="journal article" date="2009" name="PLoS ONE">
        <title>Cycle inhibiting factors (CIFs) are a growing family of functional cyclomodulins present in invertebrate and mammal bacterial pathogens.</title>
        <authorList>
            <person name="Jubelin G."/>
            <person name="Chavez C.V."/>
            <person name="Taieb F."/>
            <person name="Banfield M.J."/>
            <person name="Samba-Louaka A."/>
            <person name="Nobe R."/>
            <person name="Nougayrede J.P."/>
            <person name="Zumbihl R."/>
            <person name="Givaudan A."/>
            <person name="Escoubas J.M."/>
            <person name="Oswald E."/>
        </authorList>
    </citation>
    <scope>FUNCTION</scope>
    <scope>ACTIVE SITE</scope>
    <scope>MUTAGENESIS OF CYS-128</scope>
</reference>
<reference key="3">
    <citation type="journal article" date="2009" name="Proc. Natl. Acad. Sci. U.S.A.">
        <title>A bacterial type III effector family uses the papain-like hydrolytic activity to arrest the host cell cycle.</title>
        <authorList>
            <person name="Yao Q."/>
            <person name="Cui J."/>
            <person name="Zhu Y."/>
            <person name="Wang G."/>
            <person name="Hu L."/>
            <person name="Long C."/>
            <person name="Cao R."/>
            <person name="Liu X."/>
            <person name="Huang N."/>
            <person name="Chen S."/>
            <person name="Liu L."/>
            <person name="Shao F."/>
        </authorList>
    </citation>
    <scope>FUNCTION</scope>
    <scope>ACTIVE SITE</scope>
    <scope>MUTAGENESIS OF CYS-128</scope>
</reference>
<reference key="4">
    <citation type="journal article" date="2010" name="Microbes Infect.">
        <title>The cyclomodulin Cif of Photorhabdus luminescens inhibits insect cell proliferation and triggers host cell death by apoptosis.</title>
        <authorList>
            <person name="Chavez C.V."/>
            <person name="Jubelin G."/>
            <person name="Courties G."/>
            <person name="Gomard A."/>
            <person name="Ginibre N."/>
            <person name="Pages S."/>
            <person name="Taieb F."/>
            <person name="Girard P.A."/>
            <person name="Oswald E."/>
            <person name="Givaudan A."/>
            <person name="Zumbihl R."/>
            <person name="Escoubas J.M."/>
        </authorList>
    </citation>
    <scope>FUNCTION</scope>
</reference>
<reference evidence="14" key="5">
    <citation type="journal article" date="2009" name="PLoS ONE">
        <title>Crystal structures of Cif from bacterial pathogens Photorhabdus luminescens and Burkholderia pseudomallei.</title>
        <authorList>
            <person name="Crow A."/>
            <person name="Race P.R."/>
            <person name="Jubelin G."/>
            <person name="Varela Chavez C."/>
            <person name="Escoubas J.M."/>
            <person name="Oswald E."/>
            <person name="Banfield M.J."/>
        </authorList>
    </citation>
    <scope>X-RAY CRYSTALLOGRAPHY (1.85 ANGSTROMS) OF 53-313</scope>
    <scope>ACTIVE SITE</scope>
</reference>
<reference evidence="15" key="6">
    <citation type="journal article" date="2012" name="Proc. Natl. Acad. Sci. U.S.A.">
        <title>The molecular basis of ubiquitin-like protein NEDD8 deamidation by the bacterial effector protein Cif.</title>
        <authorList>
            <person name="Crow A."/>
            <person name="Hughes R.K."/>
            <person name="Taieb F."/>
            <person name="Oswald E."/>
            <person name="Banfield M.J."/>
        </authorList>
    </citation>
    <scope>X-RAY CRYSTALLOGRAPHY (1.60 ANGSTROMS) OF 53-313 IN COMPLEX WITH HOST NEDD8</scope>
</reference>
<organism>
    <name type="scientific">Photorhabdus laumondii subsp. laumondii (strain DSM 15139 / CIP 105565 / TT01)</name>
    <name type="common">Photorhabdus luminescens subsp. laumondii</name>
    <dbReference type="NCBI Taxonomy" id="243265"/>
    <lineage>
        <taxon>Bacteria</taxon>
        <taxon>Pseudomonadati</taxon>
        <taxon>Pseudomonadota</taxon>
        <taxon>Gammaproteobacteria</taxon>
        <taxon>Enterobacterales</taxon>
        <taxon>Morganellaceae</taxon>
        <taxon>Photorhabdus</taxon>
    </lineage>
</organism>
<keyword id="KW-0002">3D-structure</keyword>
<keyword id="KW-1048">Host nucleus</keyword>
<keyword id="KW-0378">Hydrolase</keyword>
<keyword id="KW-1185">Reference proteome</keyword>
<keyword id="KW-0964">Secreted</keyword>
<keyword id="KW-0800">Toxin</keyword>
<keyword id="KW-0843">Virulence</keyword>